<reference key="1">
    <citation type="journal article" date="2011" name="J. Bacteriol.">
        <title>Comparative genomics of 28 Salmonella enterica isolates: evidence for CRISPR-mediated adaptive sublineage evolution.</title>
        <authorList>
            <person name="Fricke W.F."/>
            <person name="Mammel M.K."/>
            <person name="McDermott P.F."/>
            <person name="Tartera C."/>
            <person name="White D.G."/>
            <person name="Leclerc J.E."/>
            <person name="Ravel J."/>
            <person name="Cebula T.A."/>
        </authorList>
    </citation>
    <scope>NUCLEOTIDE SEQUENCE [LARGE SCALE GENOMIC DNA]</scope>
    <source>
        <strain>CT_02021853</strain>
    </source>
</reference>
<sequence length="144" mass="14966">MRLNTLSPAEGSKKAGKRLGRGIGSGLGKTGGRGHKGQKSRSGGGVRRGFEGGQMPLYRRLPKFGFTSRKAAITAEVRLSDLAKVEGGVVDLNTLKAANIIGIQIEFAKVILAGEVTTPVTVRGLRVTKGARAAIEAAGGKIEE</sequence>
<keyword id="KW-0687">Ribonucleoprotein</keyword>
<keyword id="KW-0689">Ribosomal protein</keyword>
<keyword id="KW-0694">RNA-binding</keyword>
<keyword id="KW-0699">rRNA-binding</keyword>
<gene>
    <name evidence="1" type="primary">rplO</name>
    <name type="ordered locus">SeD_A3788</name>
</gene>
<proteinExistence type="inferred from homology"/>
<protein>
    <recommendedName>
        <fullName evidence="1">Large ribosomal subunit protein uL15</fullName>
    </recommendedName>
    <alternativeName>
        <fullName evidence="3">50S ribosomal protein L15</fullName>
    </alternativeName>
</protein>
<organism>
    <name type="scientific">Salmonella dublin (strain CT_02021853)</name>
    <dbReference type="NCBI Taxonomy" id="439851"/>
    <lineage>
        <taxon>Bacteria</taxon>
        <taxon>Pseudomonadati</taxon>
        <taxon>Pseudomonadota</taxon>
        <taxon>Gammaproteobacteria</taxon>
        <taxon>Enterobacterales</taxon>
        <taxon>Enterobacteriaceae</taxon>
        <taxon>Salmonella</taxon>
    </lineage>
</organism>
<comment type="function">
    <text evidence="1">Binds to the 23S rRNA.</text>
</comment>
<comment type="subunit">
    <text evidence="1">Part of the 50S ribosomal subunit.</text>
</comment>
<comment type="similarity">
    <text evidence="1">Belongs to the universal ribosomal protein uL15 family.</text>
</comment>
<evidence type="ECO:0000255" key="1">
    <source>
        <dbReference type="HAMAP-Rule" id="MF_01341"/>
    </source>
</evidence>
<evidence type="ECO:0000256" key="2">
    <source>
        <dbReference type="SAM" id="MobiDB-lite"/>
    </source>
</evidence>
<evidence type="ECO:0000305" key="3"/>
<feature type="chain" id="PRO_1000142873" description="Large ribosomal subunit protein uL15">
    <location>
        <begin position="1"/>
        <end position="144"/>
    </location>
</feature>
<feature type="region of interest" description="Disordered" evidence="2">
    <location>
        <begin position="1"/>
        <end position="54"/>
    </location>
</feature>
<feature type="compositionally biased region" description="Gly residues" evidence="2">
    <location>
        <begin position="21"/>
        <end position="31"/>
    </location>
</feature>
<name>RL15_SALDC</name>
<accession>B5FJJ5</accession>
<dbReference type="EMBL" id="CP001144">
    <property type="protein sequence ID" value="ACH76141.1"/>
    <property type="molecule type" value="Genomic_DNA"/>
</dbReference>
<dbReference type="RefSeq" id="WP_001238917.1">
    <property type="nucleotide sequence ID" value="NC_011205.1"/>
</dbReference>
<dbReference type="SMR" id="B5FJJ5"/>
<dbReference type="GeneID" id="93778686"/>
<dbReference type="KEGG" id="sed:SeD_A3788"/>
<dbReference type="HOGENOM" id="CLU_055188_4_2_6"/>
<dbReference type="Proteomes" id="UP000008322">
    <property type="component" value="Chromosome"/>
</dbReference>
<dbReference type="GO" id="GO:0022625">
    <property type="term" value="C:cytosolic large ribosomal subunit"/>
    <property type="evidence" value="ECO:0007669"/>
    <property type="project" value="TreeGrafter"/>
</dbReference>
<dbReference type="GO" id="GO:0019843">
    <property type="term" value="F:rRNA binding"/>
    <property type="evidence" value="ECO:0007669"/>
    <property type="project" value="UniProtKB-UniRule"/>
</dbReference>
<dbReference type="GO" id="GO:0003735">
    <property type="term" value="F:structural constituent of ribosome"/>
    <property type="evidence" value="ECO:0007669"/>
    <property type="project" value="InterPro"/>
</dbReference>
<dbReference type="GO" id="GO:0006412">
    <property type="term" value="P:translation"/>
    <property type="evidence" value="ECO:0007669"/>
    <property type="project" value="UniProtKB-UniRule"/>
</dbReference>
<dbReference type="FunFam" id="3.100.10.10:FF:000003">
    <property type="entry name" value="50S ribosomal protein L15"/>
    <property type="match status" value="1"/>
</dbReference>
<dbReference type="Gene3D" id="3.100.10.10">
    <property type="match status" value="1"/>
</dbReference>
<dbReference type="HAMAP" id="MF_01341">
    <property type="entry name" value="Ribosomal_uL15"/>
    <property type="match status" value="1"/>
</dbReference>
<dbReference type="InterPro" id="IPR030878">
    <property type="entry name" value="Ribosomal_uL15"/>
</dbReference>
<dbReference type="InterPro" id="IPR021131">
    <property type="entry name" value="Ribosomal_uL15/eL18"/>
</dbReference>
<dbReference type="InterPro" id="IPR036227">
    <property type="entry name" value="Ribosomal_uL15/eL18_sf"/>
</dbReference>
<dbReference type="InterPro" id="IPR005749">
    <property type="entry name" value="Ribosomal_uL15_bac-type"/>
</dbReference>
<dbReference type="InterPro" id="IPR001196">
    <property type="entry name" value="Ribosomal_uL15_CS"/>
</dbReference>
<dbReference type="NCBIfam" id="TIGR01071">
    <property type="entry name" value="rplO_bact"/>
    <property type="match status" value="1"/>
</dbReference>
<dbReference type="PANTHER" id="PTHR12934">
    <property type="entry name" value="50S RIBOSOMAL PROTEIN L15"/>
    <property type="match status" value="1"/>
</dbReference>
<dbReference type="PANTHER" id="PTHR12934:SF11">
    <property type="entry name" value="LARGE RIBOSOMAL SUBUNIT PROTEIN UL15M"/>
    <property type="match status" value="1"/>
</dbReference>
<dbReference type="Pfam" id="PF00828">
    <property type="entry name" value="Ribosomal_L27A"/>
    <property type="match status" value="1"/>
</dbReference>
<dbReference type="SUPFAM" id="SSF52080">
    <property type="entry name" value="Ribosomal proteins L15p and L18e"/>
    <property type="match status" value="1"/>
</dbReference>
<dbReference type="PROSITE" id="PS00475">
    <property type="entry name" value="RIBOSOMAL_L15"/>
    <property type="match status" value="1"/>
</dbReference>